<accession>C3P9Q1</accession>
<evidence type="ECO:0000255" key="1">
    <source>
        <dbReference type="HAMAP-Rule" id="MF_00480"/>
    </source>
</evidence>
<evidence type="ECO:0000305" key="2"/>
<proteinExistence type="inferred from homology"/>
<name>RS7_BACAA</name>
<gene>
    <name evidence="1" type="primary">rpsG</name>
    <name type="ordered locus">BAA_0122</name>
</gene>
<organism>
    <name type="scientific">Bacillus anthracis (strain A0248)</name>
    <dbReference type="NCBI Taxonomy" id="592021"/>
    <lineage>
        <taxon>Bacteria</taxon>
        <taxon>Bacillati</taxon>
        <taxon>Bacillota</taxon>
        <taxon>Bacilli</taxon>
        <taxon>Bacillales</taxon>
        <taxon>Bacillaceae</taxon>
        <taxon>Bacillus</taxon>
        <taxon>Bacillus cereus group</taxon>
    </lineage>
</organism>
<reference key="1">
    <citation type="submission" date="2009-04" db="EMBL/GenBank/DDBJ databases">
        <title>Genome sequence of Bacillus anthracis A0248.</title>
        <authorList>
            <person name="Dodson R.J."/>
            <person name="Munk A.C."/>
            <person name="Bruce D."/>
            <person name="Detter C."/>
            <person name="Tapia R."/>
            <person name="Sutton G."/>
            <person name="Sims D."/>
            <person name="Brettin T."/>
        </authorList>
    </citation>
    <scope>NUCLEOTIDE SEQUENCE [LARGE SCALE GENOMIC DNA]</scope>
    <source>
        <strain>A0248</strain>
    </source>
</reference>
<feature type="chain" id="PRO_1000135577" description="Small ribosomal subunit protein uS7">
    <location>
        <begin position="1"/>
        <end position="156"/>
    </location>
</feature>
<comment type="function">
    <text evidence="1">One of the primary rRNA binding proteins, it binds directly to 16S rRNA where it nucleates assembly of the head domain of the 30S subunit. Is located at the subunit interface close to the decoding center, probably blocks exit of the E-site tRNA.</text>
</comment>
<comment type="subunit">
    <text evidence="1">Part of the 30S ribosomal subunit. Contacts proteins S9 and S11.</text>
</comment>
<comment type="similarity">
    <text evidence="1">Belongs to the universal ribosomal protein uS7 family.</text>
</comment>
<dbReference type="EMBL" id="CP001598">
    <property type="protein sequence ID" value="ACQ47812.1"/>
    <property type="molecule type" value="Genomic_DNA"/>
</dbReference>
<dbReference type="RefSeq" id="WP_001137493.1">
    <property type="nucleotide sequence ID" value="NC_012659.1"/>
</dbReference>
<dbReference type="SMR" id="C3P9Q1"/>
<dbReference type="GeneID" id="93010947"/>
<dbReference type="KEGG" id="bai:BAA_0122"/>
<dbReference type="HOGENOM" id="CLU_072226_1_1_9"/>
<dbReference type="GO" id="GO:0015935">
    <property type="term" value="C:small ribosomal subunit"/>
    <property type="evidence" value="ECO:0007669"/>
    <property type="project" value="InterPro"/>
</dbReference>
<dbReference type="GO" id="GO:0019843">
    <property type="term" value="F:rRNA binding"/>
    <property type="evidence" value="ECO:0007669"/>
    <property type="project" value="UniProtKB-UniRule"/>
</dbReference>
<dbReference type="GO" id="GO:0003735">
    <property type="term" value="F:structural constituent of ribosome"/>
    <property type="evidence" value="ECO:0007669"/>
    <property type="project" value="InterPro"/>
</dbReference>
<dbReference type="GO" id="GO:0000049">
    <property type="term" value="F:tRNA binding"/>
    <property type="evidence" value="ECO:0007669"/>
    <property type="project" value="UniProtKB-UniRule"/>
</dbReference>
<dbReference type="GO" id="GO:0006412">
    <property type="term" value="P:translation"/>
    <property type="evidence" value="ECO:0007669"/>
    <property type="project" value="UniProtKB-UniRule"/>
</dbReference>
<dbReference type="CDD" id="cd14869">
    <property type="entry name" value="uS7_Bacteria"/>
    <property type="match status" value="1"/>
</dbReference>
<dbReference type="FunFam" id="1.10.455.10:FF:000001">
    <property type="entry name" value="30S ribosomal protein S7"/>
    <property type="match status" value="1"/>
</dbReference>
<dbReference type="Gene3D" id="1.10.455.10">
    <property type="entry name" value="Ribosomal protein S7 domain"/>
    <property type="match status" value="1"/>
</dbReference>
<dbReference type="HAMAP" id="MF_00480_B">
    <property type="entry name" value="Ribosomal_uS7_B"/>
    <property type="match status" value="1"/>
</dbReference>
<dbReference type="InterPro" id="IPR000235">
    <property type="entry name" value="Ribosomal_uS7"/>
</dbReference>
<dbReference type="InterPro" id="IPR005717">
    <property type="entry name" value="Ribosomal_uS7_bac/org-type"/>
</dbReference>
<dbReference type="InterPro" id="IPR020606">
    <property type="entry name" value="Ribosomal_uS7_CS"/>
</dbReference>
<dbReference type="InterPro" id="IPR023798">
    <property type="entry name" value="Ribosomal_uS7_dom"/>
</dbReference>
<dbReference type="InterPro" id="IPR036823">
    <property type="entry name" value="Ribosomal_uS7_dom_sf"/>
</dbReference>
<dbReference type="NCBIfam" id="TIGR01029">
    <property type="entry name" value="rpsG_bact"/>
    <property type="match status" value="1"/>
</dbReference>
<dbReference type="PANTHER" id="PTHR11205">
    <property type="entry name" value="RIBOSOMAL PROTEIN S7"/>
    <property type="match status" value="1"/>
</dbReference>
<dbReference type="Pfam" id="PF00177">
    <property type="entry name" value="Ribosomal_S7"/>
    <property type="match status" value="1"/>
</dbReference>
<dbReference type="PIRSF" id="PIRSF002122">
    <property type="entry name" value="RPS7p_RPS7a_RPS5e_RPS7o"/>
    <property type="match status" value="1"/>
</dbReference>
<dbReference type="SUPFAM" id="SSF47973">
    <property type="entry name" value="Ribosomal protein S7"/>
    <property type="match status" value="1"/>
</dbReference>
<dbReference type="PROSITE" id="PS00052">
    <property type="entry name" value="RIBOSOMAL_S7"/>
    <property type="match status" value="1"/>
</dbReference>
<protein>
    <recommendedName>
        <fullName evidence="1">Small ribosomal subunit protein uS7</fullName>
    </recommendedName>
    <alternativeName>
        <fullName evidence="2">30S ribosomal protein S7</fullName>
    </alternativeName>
</protein>
<sequence length="156" mass="17884">MPRKGPVAKRDVLPDPMYNSKLVTRLINKMMVDGKKGKSQTILYNAFDIVSERTGKEPMEVFEQALKNIMPVLEVRARRVGGANYQVPVEVRPERRTTLGLRWLVNYARLRGEKTMEERLANEILDAANNAGASVKKREDTHKMAEANKAFAHYRW</sequence>
<keyword id="KW-0687">Ribonucleoprotein</keyword>
<keyword id="KW-0689">Ribosomal protein</keyword>
<keyword id="KW-0694">RNA-binding</keyword>
<keyword id="KW-0699">rRNA-binding</keyword>
<keyword id="KW-0820">tRNA-binding</keyword>